<accession>Q9HPU6</accession>
<organism>
    <name type="scientific">Halobacterium salinarum (strain ATCC 700922 / JCM 11081 / NRC-1)</name>
    <name type="common">Halobacterium halobium</name>
    <dbReference type="NCBI Taxonomy" id="64091"/>
    <lineage>
        <taxon>Archaea</taxon>
        <taxon>Methanobacteriati</taxon>
        <taxon>Methanobacteriota</taxon>
        <taxon>Stenosarchaea group</taxon>
        <taxon>Halobacteria</taxon>
        <taxon>Halobacteriales</taxon>
        <taxon>Halobacteriaceae</taxon>
        <taxon>Halobacterium</taxon>
        <taxon>Halobacterium salinarum NRC-34001</taxon>
    </lineage>
</organism>
<comment type="function">
    <text evidence="1">Activates transcription of bacteriorhodopsin (bop) and phytoene synthase (crtB1). May interact with DNA or RNA via the zinc finger motif (By similarity).</text>
</comment>
<comment type="similarity">
    <text evidence="3">Belongs to the Brz family.</text>
</comment>
<comment type="sequence caution" evidence="3">
    <conflict type="erroneous initiation">
        <sequence resource="EMBL-CDS" id="AAG19771"/>
    </conflict>
    <text>Truncated N-terminus.</text>
</comment>
<evidence type="ECO:0000250" key="1"/>
<evidence type="ECO:0000255" key="2"/>
<evidence type="ECO:0000305" key="3"/>
<sequence length="60" mass="6798">MPITDLHCPRCGSDVKMGLPMGATVKSVTAASRQEPTSDTQKVRTVECRNDHEFFVRFEW</sequence>
<feature type="chain" id="PRO_0000411894" description="Transcriptional regulator Brz">
    <location>
        <begin position="1"/>
        <end position="60"/>
    </location>
</feature>
<feature type="zinc finger region" description="C4-type; atypical" evidence="2">
    <location>
        <begin position="8"/>
        <end position="52"/>
    </location>
</feature>
<keyword id="KW-0010">Activator</keyword>
<keyword id="KW-0479">Metal-binding</keyword>
<keyword id="KW-1185">Reference proteome</keyword>
<keyword id="KW-0804">Transcription</keyword>
<keyword id="KW-0805">Transcription regulation</keyword>
<keyword id="KW-0862">Zinc</keyword>
<keyword id="KW-0863">Zinc-finger</keyword>
<reference key="1">
    <citation type="journal article" date="2000" name="Proc. Natl. Acad. Sci. U.S.A.">
        <title>Genome sequence of Halobacterium species NRC-1.</title>
        <authorList>
            <person name="Ng W.V."/>
            <person name="Kennedy S.P."/>
            <person name="Mahairas G.G."/>
            <person name="Berquist B."/>
            <person name="Pan M."/>
            <person name="Shukla H.D."/>
            <person name="Lasky S.R."/>
            <person name="Baliga N.S."/>
            <person name="Thorsson V."/>
            <person name="Sbrogna J."/>
            <person name="Swartzell S."/>
            <person name="Weir D."/>
            <person name="Hall J."/>
            <person name="Dahl T.A."/>
            <person name="Welti R."/>
            <person name="Goo Y.A."/>
            <person name="Leithauser B."/>
            <person name="Keller K."/>
            <person name="Cruz R."/>
            <person name="Danson M.J."/>
            <person name="Hough D.W."/>
            <person name="Maddocks D.G."/>
            <person name="Jablonski P.E."/>
            <person name="Krebs M.P."/>
            <person name="Angevine C.M."/>
            <person name="Dale H."/>
            <person name="Isenbarger T.A."/>
            <person name="Peck R.F."/>
            <person name="Pohlschroder M."/>
            <person name="Spudich J.L."/>
            <person name="Jung K.-H."/>
            <person name="Alam M."/>
            <person name="Freitas T."/>
            <person name="Hou S."/>
            <person name="Daniels C.J."/>
            <person name="Dennis P.P."/>
            <person name="Omer A.D."/>
            <person name="Ebhardt H."/>
            <person name="Lowe T.M."/>
            <person name="Liang P."/>
            <person name="Riley M."/>
            <person name="Hood L."/>
            <person name="DasSarma S."/>
        </authorList>
    </citation>
    <scope>NUCLEOTIDE SEQUENCE [LARGE SCALE GENOMIC DNA]</scope>
    <source>
        <strain>ATCC 700922 / JCM 11081 / NRC-1</strain>
    </source>
</reference>
<proteinExistence type="inferred from homology"/>
<protein>
    <recommendedName>
        <fullName>Transcriptional regulator Brz</fullName>
    </recommendedName>
    <alternativeName>
        <fullName>Bacteriorhodopsin-regulating zinc finger protein</fullName>
    </alternativeName>
</protein>
<gene>
    <name type="primary">brz</name>
    <name type="ordered locus">VNG_1466H</name>
</gene>
<dbReference type="EMBL" id="AE004437">
    <property type="protein sequence ID" value="AAG19771.1"/>
    <property type="status" value="ALT_INIT"/>
    <property type="molecule type" value="Genomic_DNA"/>
</dbReference>
<dbReference type="PIR" id="G84300">
    <property type="entry name" value="G84300"/>
</dbReference>
<dbReference type="RefSeq" id="WP_012289336.1">
    <property type="nucleotide sequence ID" value="NC_002607.1"/>
</dbReference>
<dbReference type="STRING" id="64091.VNG_1466H"/>
<dbReference type="PaxDb" id="64091-VNG_1466H"/>
<dbReference type="GeneID" id="89349762"/>
<dbReference type="KEGG" id="hal:VNG_1466H"/>
<dbReference type="PATRIC" id="fig|64091.14.peg.1121"/>
<dbReference type="HOGENOM" id="CLU_209475_0_0_2"/>
<dbReference type="InParanoid" id="Q9HPU6"/>
<dbReference type="OrthoDB" id="236885at2157"/>
<dbReference type="Proteomes" id="UP000000554">
    <property type="component" value="Chromosome"/>
</dbReference>
<dbReference type="GO" id="GO:0008270">
    <property type="term" value="F:zinc ion binding"/>
    <property type="evidence" value="ECO:0007669"/>
    <property type="project" value="UniProtKB-KW"/>
</dbReference>
<dbReference type="InterPro" id="IPR053463">
    <property type="entry name" value="Brz_Regulator"/>
</dbReference>
<dbReference type="NCBIfam" id="NF041795">
    <property type="entry name" value="Brz"/>
    <property type="match status" value="1"/>
</dbReference>
<dbReference type="Pfam" id="PF23454">
    <property type="entry name" value="Zn_ribbon_Brz"/>
    <property type="match status" value="1"/>
</dbReference>
<name>BRZ_HALSA</name>